<evidence type="ECO:0000255" key="1">
    <source>
        <dbReference type="HAMAP-Rule" id="MF_00539"/>
    </source>
</evidence>
<evidence type="ECO:0000305" key="2"/>
<keyword id="KW-1185">Reference proteome</keyword>
<keyword id="KW-0687">Ribonucleoprotein</keyword>
<keyword id="KW-0689">Ribosomal protein</keyword>
<comment type="similarity">
    <text evidence="1">Belongs to the bacterial ribosomal protein bL27 family.</text>
</comment>
<dbReference type="EMBL" id="AL583922">
    <property type="protein sequence ID" value="CAC30416.1"/>
    <property type="molecule type" value="Genomic_DNA"/>
</dbReference>
<dbReference type="PIR" id="C87092">
    <property type="entry name" value="C87092"/>
</dbReference>
<dbReference type="RefSeq" id="NP_302031.1">
    <property type="nucleotide sequence ID" value="NC_002677.1"/>
</dbReference>
<dbReference type="RefSeq" id="WP_010908352.1">
    <property type="nucleotide sequence ID" value="NC_002677.1"/>
</dbReference>
<dbReference type="SMR" id="Q9CBZ3"/>
<dbReference type="STRING" id="272631.gene:17575304"/>
<dbReference type="KEGG" id="mle:ML1466"/>
<dbReference type="PATRIC" id="fig|272631.5.peg.2742"/>
<dbReference type="Leproma" id="ML1466"/>
<dbReference type="eggNOG" id="COG0211">
    <property type="taxonomic scope" value="Bacteria"/>
</dbReference>
<dbReference type="HOGENOM" id="CLU_095424_4_0_11"/>
<dbReference type="OrthoDB" id="9803474at2"/>
<dbReference type="Proteomes" id="UP000000806">
    <property type="component" value="Chromosome"/>
</dbReference>
<dbReference type="GO" id="GO:0022625">
    <property type="term" value="C:cytosolic large ribosomal subunit"/>
    <property type="evidence" value="ECO:0007669"/>
    <property type="project" value="TreeGrafter"/>
</dbReference>
<dbReference type="GO" id="GO:0003735">
    <property type="term" value="F:structural constituent of ribosome"/>
    <property type="evidence" value="ECO:0007669"/>
    <property type="project" value="InterPro"/>
</dbReference>
<dbReference type="GO" id="GO:0006412">
    <property type="term" value="P:translation"/>
    <property type="evidence" value="ECO:0007669"/>
    <property type="project" value="UniProtKB-UniRule"/>
</dbReference>
<dbReference type="FunFam" id="2.40.50.100:FF:000020">
    <property type="entry name" value="50S ribosomal protein L27"/>
    <property type="match status" value="1"/>
</dbReference>
<dbReference type="Gene3D" id="2.40.50.100">
    <property type="match status" value="1"/>
</dbReference>
<dbReference type="HAMAP" id="MF_00539">
    <property type="entry name" value="Ribosomal_bL27"/>
    <property type="match status" value="1"/>
</dbReference>
<dbReference type="InterPro" id="IPR001684">
    <property type="entry name" value="Ribosomal_bL27"/>
</dbReference>
<dbReference type="InterPro" id="IPR018261">
    <property type="entry name" value="Ribosomal_bL27_CS"/>
</dbReference>
<dbReference type="NCBIfam" id="TIGR00062">
    <property type="entry name" value="L27"/>
    <property type="match status" value="1"/>
</dbReference>
<dbReference type="PANTHER" id="PTHR15893:SF0">
    <property type="entry name" value="LARGE RIBOSOMAL SUBUNIT PROTEIN BL27M"/>
    <property type="match status" value="1"/>
</dbReference>
<dbReference type="PANTHER" id="PTHR15893">
    <property type="entry name" value="RIBOSOMAL PROTEIN L27"/>
    <property type="match status" value="1"/>
</dbReference>
<dbReference type="Pfam" id="PF01016">
    <property type="entry name" value="Ribosomal_L27"/>
    <property type="match status" value="1"/>
</dbReference>
<dbReference type="PRINTS" id="PR00063">
    <property type="entry name" value="RIBOSOMALL27"/>
</dbReference>
<dbReference type="SUPFAM" id="SSF110324">
    <property type="entry name" value="Ribosomal L27 protein-like"/>
    <property type="match status" value="1"/>
</dbReference>
<dbReference type="PROSITE" id="PS00831">
    <property type="entry name" value="RIBOSOMAL_L27"/>
    <property type="match status" value="1"/>
</dbReference>
<sequence>MAHKKGASSSRNGRDSAAQRLGVKRFGGQVVKAGEILVRQRGTKFHPGVNVGRGGDDTLFATSAGAVEFGVKRGRKTVNIVAVGLTAD</sequence>
<gene>
    <name evidence="1" type="primary">rpmA</name>
    <name type="ordered locus">ML1466</name>
</gene>
<reference key="1">
    <citation type="journal article" date="2001" name="Nature">
        <title>Massive gene decay in the leprosy bacillus.</title>
        <authorList>
            <person name="Cole S.T."/>
            <person name="Eiglmeier K."/>
            <person name="Parkhill J."/>
            <person name="James K.D."/>
            <person name="Thomson N.R."/>
            <person name="Wheeler P.R."/>
            <person name="Honore N."/>
            <person name="Garnier T."/>
            <person name="Churcher C.M."/>
            <person name="Harris D.E."/>
            <person name="Mungall K.L."/>
            <person name="Basham D."/>
            <person name="Brown D."/>
            <person name="Chillingworth T."/>
            <person name="Connor R."/>
            <person name="Davies R.M."/>
            <person name="Devlin K."/>
            <person name="Duthoy S."/>
            <person name="Feltwell T."/>
            <person name="Fraser A."/>
            <person name="Hamlin N."/>
            <person name="Holroyd S."/>
            <person name="Hornsby T."/>
            <person name="Jagels K."/>
            <person name="Lacroix C."/>
            <person name="Maclean J."/>
            <person name="Moule S."/>
            <person name="Murphy L.D."/>
            <person name="Oliver K."/>
            <person name="Quail M.A."/>
            <person name="Rajandream M.A."/>
            <person name="Rutherford K.M."/>
            <person name="Rutter S."/>
            <person name="Seeger K."/>
            <person name="Simon S."/>
            <person name="Simmonds M."/>
            <person name="Skelton J."/>
            <person name="Squares R."/>
            <person name="Squares S."/>
            <person name="Stevens K."/>
            <person name="Taylor K."/>
            <person name="Whitehead S."/>
            <person name="Woodward J.R."/>
            <person name="Barrell B.G."/>
        </authorList>
    </citation>
    <scope>NUCLEOTIDE SEQUENCE [LARGE SCALE GENOMIC DNA]</scope>
    <source>
        <strain>TN</strain>
    </source>
</reference>
<organism>
    <name type="scientific">Mycobacterium leprae (strain TN)</name>
    <dbReference type="NCBI Taxonomy" id="272631"/>
    <lineage>
        <taxon>Bacteria</taxon>
        <taxon>Bacillati</taxon>
        <taxon>Actinomycetota</taxon>
        <taxon>Actinomycetes</taxon>
        <taxon>Mycobacteriales</taxon>
        <taxon>Mycobacteriaceae</taxon>
        <taxon>Mycobacterium</taxon>
    </lineage>
</organism>
<feature type="chain" id="PRO_0000181123" description="Large ribosomal subunit protein bL27">
    <location>
        <begin position="1"/>
        <end position="88"/>
    </location>
</feature>
<proteinExistence type="inferred from homology"/>
<name>RL27_MYCLE</name>
<accession>Q9CBZ3</accession>
<protein>
    <recommendedName>
        <fullName evidence="1">Large ribosomal subunit protein bL27</fullName>
    </recommendedName>
    <alternativeName>
        <fullName evidence="2">50S ribosomal protein L27</fullName>
    </alternativeName>
</protein>